<keyword id="KW-0963">Cytoplasm</keyword>
<keyword id="KW-0570">Pentose shunt</keyword>
<keyword id="KW-0704">Schiff base</keyword>
<keyword id="KW-0808">Transferase</keyword>
<dbReference type="EC" id="2.2.1.2" evidence="1"/>
<dbReference type="EMBL" id="CP000867">
    <property type="protein sequence ID" value="ABX02179.1"/>
    <property type="molecule type" value="Genomic_DNA"/>
</dbReference>
<dbReference type="SMR" id="A9AA06"/>
<dbReference type="STRING" id="444158.MmarC6_1366"/>
<dbReference type="KEGG" id="mmx:MmarC6_1366"/>
<dbReference type="eggNOG" id="arCOG05061">
    <property type="taxonomic scope" value="Archaea"/>
</dbReference>
<dbReference type="HOGENOM" id="CLU_079764_0_0_2"/>
<dbReference type="OrthoDB" id="6661at2157"/>
<dbReference type="PhylomeDB" id="A9AA06"/>
<dbReference type="UniPathway" id="UPA00115">
    <property type="reaction ID" value="UER00414"/>
</dbReference>
<dbReference type="GO" id="GO:0005737">
    <property type="term" value="C:cytoplasm"/>
    <property type="evidence" value="ECO:0007669"/>
    <property type="project" value="UniProtKB-SubCell"/>
</dbReference>
<dbReference type="GO" id="GO:0016832">
    <property type="term" value="F:aldehyde-lyase activity"/>
    <property type="evidence" value="ECO:0007669"/>
    <property type="project" value="InterPro"/>
</dbReference>
<dbReference type="GO" id="GO:0004801">
    <property type="term" value="F:transaldolase activity"/>
    <property type="evidence" value="ECO:0007669"/>
    <property type="project" value="UniProtKB-UniRule"/>
</dbReference>
<dbReference type="GO" id="GO:0005975">
    <property type="term" value="P:carbohydrate metabolic process"/>
    <property type="evidence" value="ECO:0007669"/>
    <property type="project" value="InterPro"/>
</dbReference>
<dbReference type="GO" id="GO:0006098">
    <property type="term" value="P:pentose-phosphate shunt"/>
    <property type="evidence" value="ECO:0007669"/>
    <property type="project" value="UniProtKB-UniRule"/>
</dbReference>
<dbReference type="CDD" id="cd00956">
    <property type="entry name" value="Transaldolase_FSA"/>
    <property type="match status" value="1"/>
</dbReference>
<dbReference type="FunFam" id="3.20.20.70:FF:000018">
    <property type="entry name" value="Probable transaldolase"/>
    <property type="match status" value="1"/>
</dbReference>
<dbReference type="Gene3D" id="3.20.20.70">
    <property type="entry name" value="Aldolase class I"/>
    <property type="match status" value="1"/>
</dbReference>
<dbReference type="HAMAP" id="MF_00494">
    <property type="entry name" value="Transaldolase_3b"/>
    <property type="match status" value="1"/>
</dbReference>
<dbReference type="InterPro" id="IPR013785">
    <property type="entry name" value="Aldolase_TIM"/>
</dbReference>
<dbReference type="InterPro" id="IPR001585">
    <property type="entry name" value="TAL/FSA"/>
</dbReference>
<dbReference type="InterPro" id="IPR022999">
    <property type="entry name" value="Transaldolase_3B"/>
</dbReference>
<dbReference type="InterPro" id="IPR004731">
    <property type="entry name" value="Transaldolase_3B/F6P_aldolase"/>
</dbReference>
<dbReference type="InterPro" id="IPR018225">
    <property type="entry name" value="Transaldolase_AS"/>
</dbReference>
<dbReference type="InterPro" id="IPR033919">
    <property type="entry name" value="TSA/FSA_arc/bac"/>
</dbReference>
<dbReference type="NCBIfam" id="TIGR00875">
    <property type="entry name" value="fsa_talC_mipB"/>
    <property type="match status" value="1"/>
</dbReference>
<dbReference type="PANTHER" id="PTHR10683:SF40">
    <property type="entry name" value="FRUCTOSE-6-PHOSPHATE ALDOLASE 1-RELATED"/>
    <property type="match status" value="1"/>
</dbReference>
<dbReference type="PANTHER" id="PTHR10683">
    <property type="entry name" value="TRANSALDOLASE"/>
    <property type="match status" value="1"/>
</dbReference>
<dbReference type="Pfam" id="PF00923">
    <property type="entry name" value="TAL_FSA"/>
    <property type="match status" value="1"/>
</dbReference>
<dbReference type="SUPFAM" id="SSF51569">
    <property type="entry name" value="Aldolase"/>
    <property type="match status" value="1"/>
</dbReference>
<dbReference type="PROSITE" id="PS01054">
    <property type="entry name" value="TRANSALDOLASE_1"/>
    <property type="match status" value="1"/>
</dbReference>
<organism>
    <name type="scientific">Methanococcus maripaludis (strain C6 / ATCC BAA-1332)</name>
    <dbReference type="NCBI Taxonomy" id="444158"/>
    <lineage>
        <taxon>Archaea</taxon>
        <taxon>Methanobacteriati</taxon>
        <taxon>Methanobacteriota</taxon>
        <taxon>Methanomada group</taxon>
        <taxon>Methanococci</taxon>
        <taxon>Methanococcales</taxon>
        <taxon>Methanococcaceae</taxon>
        <taxon>Methanococcus</taxon>
    </lineage>
</organism>
<sequence length="215" mass="23420">MKFFLDTANVDKIKEFNALGLVDGVTTNPSLIKKEGRDFYEVIKEICSIVEGPVSAEVIALDAEGMVNEAKELVKIAKNVVIKIPMTKEGMKAVNILSKEGIKTNVTLIFSANQALLAAKAGATYVSPFVGRLDDIGQDGLLLISEIMQIFGAYGIETEVIVASVRHPIHVTESAKMGADIATIPFDVLDKLFNHSLTDIGIEKFLADWDAHMKR</sequence>
<protein>
    <recommendedName>
        <fullName evidence="1">Probable transaldolase</fullName>
        <ecNumber evidence="1">2.2.1.2</ecNumber>
    </recommendedName>
</protein>
<comment type="function">
    <text evidence="1">Transaldolase is important for the balance of metabolites in the pentose-phosphate pathway.</text>
</comment>
<comment type="catalytic activity">
    <reaction evidence="1">
        <text>D-sedoheptulose 7-phosphate + D-glyceraldehyde 3-phosphate = D-erythrose 4-phosphate + beta-D-fructose 6-phosphate</text>
        <dbReference type="Rhea" id="RHEA:17053"/>
        <dbReference type="ChEBI" id="CHEBI:16897"/>
        <dbReference type="ChEBI" id="CHEBI:57483"/>
        <dbReference type="ChEBI" id="CHEBI:57634"/>
        <dbReference type="ChEBI" id="CHEBI:59776"/>
        <dbReference type="EC" id="2.2.1.2"/>
    </reaction>
</comment>
<comment type="pathway">
    <text evidence="1">Carbohydrate degradation; pentose phosphate pathway; D-glyceraldehyde 3-phosphate and beta-D-fructose 6-phosphate from D-ribose 5-phosphate and D-xylulose 5-phosphate (non-oxidative stage): step 2/3.</text>
</comment>
<comment type="subcellular location">
    <subcellularLocation>
        <location evidence="1">Cytoplasm</location>
    </subcellularLocation>
</comment>
<comment type="similarity">
    <text evidence="1">Belongs to the transaldolase family. Type 3B subfamily.</text>
</comment>
<gene>
    <name evidence="1" type="primary">tal</name>
    <name type="ordered locus">MmarC6_1366</name>
</gene>
<reference key="1">
    <citation type="submission" date="2007-10" db="EMBL/GenBank/DDBJ databases">
        <title>Complete sequence of Methanococcus maripaludis C6.</title>
        <authorList>
            <consortium name="US DOE Joint Genome Institute"/>
            <person name="Copeland A."/>
            <person name="Lucas S."/>
            <person name="Lapidus A."/>
            <person name="Barry K."/>
            <person name="Glavina del Rio T."/>
            <person name="Dalin E."/>
            <person name="Tice H."/>
            <person name="Pitluck S."/>
            <person name="Clum A."/>
            <person name="Schmutz J."/>
            <person name="Larimer F."/>
            <person name="Land M."/>
            <person name="Hauser L."/>
            <person name="Kyrpides N."/>
            <person name="Mikhailova N."/>
            <person name="Sieprawska-Lupa M."/>
            <person name="Whitman W.B."/>
            <person name="Richardson P."/>
        </authorList>
    </citation>
    <scope>NUCLEOTIDE SEQUENCE [LARGE SCALE GENOMIC DNA]</scope>
    <source>
        <strain>C6 / ATCC BAA-1332</strain>
    </source>
</reference>
<proteinExistence type="inferred from homology"/>
<name>TAL_METM6</name>
<evidence type="ECO:0000255" key="1">
    <source>
        <dbReference type="HAMAP-Rule" id="MF_00494"/>
    </source>
</evidence>
<accession>A9AA06</accession>
<feature type="chain" id="PRO_1000126329" description="Probable transaldolase">
    <location>
        <begin position="1"/>
        <end position="215"/>
    </location>
</feature>
<feature type="active site" description="Schiff-base intermediate with substrate" evidence="1">
    <location>
        <position position="83"/>
    </location>
</feature>